<gene>
    <name type="primary">GPA1</name>
    <name type="synonym">CDC70</name>
    <name type="synonym">DAC1</name>
    <name type="synonym">SCG1</name>
    <name type="ordered locus">YHR005C</name>
</gene>
<protein>
    <recommendedName>
        <fullName>Guanine nucleotide-binding protein alpha-1 subunit</fullName>
    </recommendedName>
    <alternativeName>
        <fullName>GP1-alpha</fullName>
    </alternativeName>
</protein>
<proteinExistence type="evidence at protein level"/>
<sequence length="472" mass="54076">MGCTVSTQTIGDESDPFLQNKRANDVIEQSLQLEKQRDKNEIKLLLLGAGESGKSTVLKQLKLLHQGGFSHQERLQYAQVIWADAIQSMKILIIQARKLGIQLDCDDPINNKDLFACKRILLKAKALDYINASVAGGSDFLNDYVLKYSERYETRRRVQSTGRAKAAFDEDGNISNVKSDTDRDAETVTQNEDADRNNSSRINLQDICKDLNQEGDDQMFVRKTSREIQGQNRRNLIHEDIAKAIKQLWNNDKGIKQCFARSNEFQLEGSAAYYFDNIEKFASPNYVCTDEDILKGRIKTTGITETEFNIGSSKFKVLDAGGQRSERKKWIHCFEGITAVLFVLAMSEYDQMLFEDERVNRMHESIMLFDTLLNSKWFKDTPFILFLNKIDLFEEKVKSMPIRKYFPDYQGRVGDAEAGLKYFEKIFLSLNKTNKPIYVKRTCATDTQTMKFVLSAVTDLIIQQNLKKIGII</sequence>
<organism>
    <name type="scientific">Saccharomyces cerevisiae (strain ATCC 204508 / S288c)</name>
    <name type="common">Baker's yeast</name>
    <dbReference type="NCBI Taxonomy" id="559292"/>
    <lineage>
        <taxon>Eukaryota</taxon>
        <taxon>Fungi</taxon>
        <taxon>Dikarya</taxon>
        <taxon>Ascomycota</taxon>
        <taxon>Saccharomycotina</taxon>
        <taxon>Saccharomycetes</taxon>
        <taxon>Saccharomycetales</taxon>
        <taxon>Saccharomycetaceae</taxon>
        <taxon>Saccharomyces</taxon>
    </lineage>
</organism>
<keyword id="KW-0002">3D-structure</keyword>
<keyword id="KW-1003">Cell membrane</keyword>
<keyword id="KW-0967">Endosome</keyword>
<keyword id="KW-0342">GTP-binding</keyword>
<keyword id="KW-0378">Hydrolase</keyword>
<keyword id="KW-1017">Isopeptide bond</keyword>
<keyword id="KW-0449">Lipoprotein</keyword>
<keyword id="KW-0460">Magnesium</keyword>
<keyword id="KW-0472">Membrane</keyword>
<keyword id="KW-0479">Metal-binding</keyword>
<keyword id="KW-0519">Myristate</keyword>
<keyword id="KW-0547">Nucleotide-binding</keyword>
<keyword id="KW-0564">Palmitate</keyword>
<keyword id="KW-0589">Pheromone response</keyword>
<keyword id="KW-1185">Reference proteome</keyword>
<keyword id="KW-0807">Transducer</keyword>
<keyword id="KW-0832">Ubl conjugation</keyword>
<reference key="1">
    <citation type="journal article" date="1987" name="Proc. Natl. Acad. Sci. U.S.A.">
        <title>Occurrence in Saccharomyces cerevisiae of a gene homologous to the cDNA coding for the alpha subunit of mammalian G proteins.</title>
        <authorList>
            <person name="Nakafuku M."/>
            <person name="Itoh H."/>
            <person name="Nakamura S."/>
            <person name="Kaziro Y."/>
        </authorList>
    </citation>
    <scope>NUCLEOTIDE SEQUENCE [GENOMIC DNA]</scope>
</reference>
<reference key="2">
    <citation type="journal article" date="1987" name="Cell">
        <title>The yeast SCG1 gene: a G alpha-like protein implicated in the a- and alpha-factor response pathway.</title>
        <authorList>
            <person name="Dietzel C."/>
            <person name="Kurjan J."/>
        </authorList>
    </citation>
    <scope>NUCLEOTIDE SEQUENCE [GENOMIC DNA]</scope>
    <scope>FUNCTION</scope>
</reference>
<reference key="3">
    <citation type="journal article" date="1994" name="Science">
        <title>Complete nucleotide sequence of Saccharomyces cerevisiae chromosome VIII.</title>
        <authorList>
            <person name="Johnston M."/>
            <person name="Andrews S."/>
            <person name="Brinkman R."/>
            <person name="Cooper J."/>
            <person name="Ding H."/>
            <person name="Dover J."/>
            <person name="Du Z."/>
            <person name="Favello A."/>
            <person name="Fulton L."/>
            <person name="Gattung S."/>
            <person name="Geisel C."/>
            <person name="Kirsten J."/>
            <person name="Kucaba T."/>
            <person name="Hillier L.W."/>
            <person name="Jier M."/>
            <person name="Johnston L."/>
            <person name="Langston Y."/>
            <person name="Latreille P."/>
            <person name="Louis E.J."/>
            <person name="Macri C."/>
            <person name="Mardis E."/>
            <person name="Menezes S."/>
            <person name="Mouser L."/>
            <person name="Nhan M."/>
            <person name="Rifkin L."/>
            <person name="Riles L."/>
            <person name="St Peter H."/>
            <person name="Trevaskis E."/>
            <person name="Vaughan K."/>
            <person name="Vignati D."/>
            <person name="Wilcox L."/>
            <person name="Wohldman P."/>
            <person name="Waterston R."/>
            <person name="Wilson R."/>
            <person name="Vaudin M."/>
        </authorList>
    </citation>
    <scope>NUCLEOTIDE SEQUENCE [LARGE SCALE GENOMIC DNA]</scope>
    <source>
        <strain>ATCC 204508 / S288c</strain>
    </source>
</reference>
<reference key="4">
    <citation type="journal article" date="2014" name="G3 (Bethesda)">
        <title>The reference genome sequence of Saccharomyces cerevisiae: Then and now.</title>
        <authorList>
            <person name="Engel S.R."/>
            <person name="Dietrich F.S."/>
            <person name="Fisk D.G."/>
            <person name="Binkley G."/>
            <person name="Balakrishnan R."/>
            <person name="Costanzo M.C."/>
            <person name="Dwight S.S."/>
            <person name="Hitz B.C."/>
            <person name="Karra K."/>
            <person name="Nash R.S."/>
            <person name="Weng S."/>
            <person name="Wong E.D."/>
            <person name="Lloyd P."/>
            <person name="Skrzypek M.S."/>
            <person name="Miyasato S.R."/>
            <person name="Simison M."/>
            <person name="Cherry J.M."/>
        </authorList>
    </citation>
    <scope>GENOME REANNOTATION</scope>
    <source>
        <strain>ATCC 204508 / S288c</strain>
    </source>
</reference>
<reference key="5">
    <citation type="journal article" date="2007" name="Genome Res.">
        <title>Approaching a complete repository of sequence-verified protein-encoding clones for Saccharomyces cerevisiae.</title>
        <authorList>
            <person name="Hu Y."/>
            <person name="Rolfs A."/>
            <person name="Bhullar B."/>
            <person name="Murthy T.V.S."/>
            <person name="Zhu C."/>
            <person name="Berger M.F."/>
            <person name="Camargo A.A."/>
            <person name="Kelley F."/>
            <person name="McCarron S."/>
            <person name="Jepson D."/>
            <person name="Richardson A."/>
            <person name="Raphael J."/>
            <person name="Moreira D."/>
            <person name="Taycher E."/>
            <person name="Zuo D."/>
            <person name="Mohr S."/>
            <person name="Kane M.F."/>
            <person name="Williamson J."/>
            <person name="Simpson A.J.G."/>
            <person name="Bulyk M.L."/>
            <person name="Harlow E."/>
            <person name="Marsischky G."/>
            <person name="Kolodner R.D."/>
            <person name="LaBaer J."/>
        </authorList>
    </citation>
    <scope>NUCLEOTIDE SEQUENCE [GENOMIC DNA]</scope>
    <source>
        <strain>ATCC 204508 / S288c</strain>
    </source>
</reference>
<reference key="6">
    <citation type="journal article" date="1988" name="Mol. Cell. Biol.">
        <title>Mutations in a gene encoding the alpha subunit of a Saccharomyces cerevisiae G protein indicate a role in mating pheromone signaling.</title>
        <authorList>
            <person name="Jahng K.-Y."/>
            <person name="Ferguson J."/>
            <person name="Reed S.I."/>
        </authorList>
    </citation>
    <scope>FUNCTION</scope>
</reference>
<reference key="7">
    <citation type="journal article" date="1989" name="Cell">
        <title>Constitutive mutants in the yeast pheromone response: ordered function of the gene products.</title>
        <authorList>
            <person name="Blinder D."/>
            <person name="Bouvier S."/>
            <person name="Jenness D.D."/>
        </authorList>
    </citation>
    <scope>FUNCTION</scope>
</reference>
<reference key="8">
    <citation type="journal article" date="1989" name="Mol. Cell. Biol.">
        <title>The yeast G-protein homolog is involved in the mating pheromone signal transduction system.</title>
        <authorList>
            <person name="Fujimura H.A."/>
        </authorList>
    </citation>
    <scope>FUNCTION</scope>
</reference>
<reference key="9">
    <citation type="journal article" date="1989" name="Mol. Cell. Biol.">
        <title>GPA1Val-50 mutation in the mating-factor signaling pathway in Saccharomyces cerevisiae.</title>
        <authorList>
            <person name="Miyajima I."/>
            <person name="Arai K."/>
            <person name="Matsumoto K."/>
        </authorList>
    </citation>
    <scope>FUNCTION</scope>
    <scope>MUTAGENESIS OF GLY-50</scope>
</reference>
<reference key="10">
    <citation type="journal article" date="1990" name="EMBO J.">
        <title>Regulation of the yeast pheromone response pathway by G protein subunits.</title>
        <authorList>
            <person name="Nomoto S."/>
            <person name="Nakayama N."/>
            <person name="Arai K."/>
            <person name="Matsumoto K."/>
        </authorList>
    </citation>
    <scope>FUNCTION</scope>
</reference>
<reference key="11">
    <citation type="journal article" date="1990" name="Mol. Cell. Biol.">
        <title>Stoichiometry of G protein subunits affects the Saccharomyces cerevisiae mating pheromone signal transduction pathway.</title>
        <authorList>
            <person name="Cole G.M."/>
            <person name="Stone D.E."/>
            <person name="Reed S.I."/>
        </authorList>
    </citation>
    <scope>FUNCTION</scope>
</reference>
<reference key="12">
    <citation type="journal article" date="1990" name="Mol. Cell. Biol.">
        <title>G protein mutations that alter the pheromone response in Saccharomyces cerevisiae.</title>
        <authorList>
            <person name="Stone D.E."/>
            <person name="Reed S.I."/>
        </authorList>
    </citation>
    <scope>FUNCTION</scope>
    <scope>MUTAGENESIS OF GLY-50; GLY-322; GLU-355; GLU-364 AND GLY-470</scope>
</reference>
<reference key="13">
    <citation type="journal article" date="1990" name="Proc. Natl. Acad. Sci. U.S.A.">
        <title>Beta and gamma subunits of a yeast guanine nucleotide-binding protein are not essential for membrane association of the alpha subunit but are required for receptor coupling.</title>
        <authorList>
            <person name="Blumer K.J."/>
            <person name="Thorner J."/>
        </authorList>
    </citation>
    <scope>FUNCTION</scope>
    <scope>SUBCELLULAR LOCATION</scope>
</reference>
<reference key="14">
    <citation type="journal article" date="1991" name="Genes Dev.">
        <title>The carboxyl terminus of Scg1, the G alpha subunit involved in yeast mating, is implicated in interactions with the pheromone receptors.</title>
        <authorList>
            <person name="Hirsch J.P."/>
            <person name="Dietzel C."/>
            <person name="Kurjan J."/>
        </authorList>
    </citation>
    <scope>MUTAGENESIS OF LYS-467 AND LYS-468</scope>
</reference>
<reference key="15">
    <citation type="journal article" date="1991" name="Genes Dev.">
        <title>Mutations in the guanine nucleotide-binding domains of a yeast G alpha protein confer a constitutive or uninducible state to the pheromone response pathway.</title>
        <authorList>
            <person name="Kurjan J."/>
            <person name="Hirsch J.P."/>
            <person name="Dietzel C."/>
        </authorList>
    </citation>
    <scope>FUNCTION</scope>
    <scope>MUTAGENESIS OF GLY-50; GLY-322; ASN-388 AND ASP-391</scope>
</reference>
<reference key="16">
    <citation type="journal article" date="1991" name="Genes Dev.">
        <title>N-myristoylation is required for function of the pheromone-responsive G alpha protein of yeast: conditional activation of the pheromone response by a temperature-sensitive N-myristoyl transferase.</title>
        <authorList>
            <person name="Stone D.E."/>
            <person name="Cole G.M."/>
            <person name="de Barros Lopes M."/>
            <person name="Goebl M."/>
            <person name="Reed S.I."/>
        </authorList>
    </citation>
    <scope>MYRISTOYLATION AT GLY-2</scope>
</reference>
<reference key="17">
    <citation type="journal article" date="1993" name="Mol. Cell. Biol.">
        <title>Interactions among the subunits of the G protein involved in Saccharomyces cerevisiae mating.</title>
        <authorList>
            <person name="Clark K.L."/>
            <person name="Dignard D."/>
            <person name="Thomas D.Y."/>
            <person name="Whiteway M."/>
        </authorList>
    </citation>
    <scope>INTERACTION WITH STE4</scope>
</reference>
<reference key="18">
    <citation type="journal article" date="1993" name="Mol. Microbiol.">
        <title>Suppression of a dominant G-protein beta-subunit mutation in yeast by G alpha protein expression.</title>
        <authorList>
            <person name="Zhang M."/>
            <person name="Tipper D.J."/>
        </authorList>
    </citation>
    <scope>FUNCTION</scope>
</reference>
<reference key="19">
    <citation type="journal article" date="1993" name="Proc. Natl. Acad. Sci. U.S.A.">
        <title>Pheromone action regulates G-protein alpha-subunit myristoylation in the yeast Saccharomyces cerevisiae.</title>
        <authorList>
            <person name="Dohlman H.G."/>
            <person name="Goldsmith P."/>
            <person name="Spiegel A.M."/>
            <person name="Thorner J."/>
        </authorList>
    </citation>
    <scope>MYRISTOYLATION AT GLY-2</scope>
</reference>
<reference key="20">
    <citation type="journal article" date="1996" name="Biochemistry">
        <title>Partial constitutive activation of pheromone responses by a palmitoylation-site mutant of a G protein alpha subunit in yeast.</title>
        <authorList>
            <person name="Song J."/>
            <person name="Dohlman H.G."/>
        </authorList>
    </citation>
    <scope>PALMITOYLATION AT CYS-3</scope>
    <scope>MUTAGENESIS OF GLY-2 AND CYS-3</scope>
</reference>
<reference key="21">
    <citation type="journal article" date="1996" name="J. Biol. Chem.">
        <title>Regulation of membrane and subunit interactions by N-myristoylation of a G protein alpha subunit in yeast.</title>
        <authorList>
            <person name="Song J."/>
            <person name="Hirschman J."/>
            <person name="Gunn K."/>
            <person name="Dohlman H.G."/>
        </authorList>
    </citation>
    <scope>MYRISTOYLATION AT GLY-2</scope>
    <scope>MUTAGENESIS OF GLY-2</scope>
    <scope>SUBCELLULAR LOCATION</scope>
</reference>
<reference key="22">
    <citation type="journal article" date="1996" name="Mol. Cell. Biol.">
        <title>Sst2, a negative regulator of pheromone signaling in the yeast Saccharomyces cerevisiae: Expression, localization, and genetic interaction and physical association with Gpa1 (the G-protein alpha subunit).</title>
        <authorList>
            <person name="Dohlman H.G."/>
            <person name="Song J."/>
            <person name="Ma D."/>
            <person name="Courchesne W.E."/>
            <person name="Thorner J."/>
        </authorList>
    </citation>
    <scope>INTERACTION WITH SST2</scope>
</reference>
<reference key="23">
    <citation type="journal article" date="1996" name="Mol. Cell. Biol.">
        <title>The mating-specific G(alpha) protein of Saccharomyces cerevisiae downregulates the mating signal by a mechanism that is dependent on pheromone and independent of G(beta)(gamma) sequestration.</title>
        <authorList>
            <person name="Stratton H.F."/>
            <person name="Zhou J."/>
            <person name="Reed S.I."/>
            <person name="Stone D.E."/>
        </authorList>
    </citation>
    <scope>FUNCTION</scope>
    <scope>MUTAGENESIS OF GLY-322; GLU-364 AND ASN-388</scope>
</reference>
<reference key="24">
    <citation type="journal article" date="1998" name="Biochemistry">
        <title>Sst2 is a GTPase-activating protein for Gpa1: purification and characterization of a cognate RGS-Galpha protein pair in yeast.</title>
        <authorList>
            <person name="Apanovitch D.M."/>
            <person name="Slep K.C."/>
            <person name="Sigler P.B."/>
            <person name="Dohlman H.G."/>
        </authorList>
    </citation>
    <scope>FUNCTION</scope>
    <scope>INTERACTION WITH SST2</scope>
</reference>
<reference key="25">
    <citation type="journal article" date="1998" name="J. Biol. Chem.">
        <title>Selective uncoupling of RGS action by a single point mutation in the G protein alpha-subunit.</title>
        <authorList>
            <person name="DiBello P.R."/>
            <person name="Garrison T.R."/>
            <person name="Apanovitch D.M."/>
            <person name="Hoffman G."/>
            <person name="Shuey D.J."/>
            <person name="Mason K."/>
            <person name="Cockett M.I."/>
            <person name="Dohlman H.G."/>
        </authorList>
    </citation>
    <scope>MUTAGENESIS OF GLY-302</scope>
</reference>
<reference key="26">
    <citation type="journal article" date="1998" name="J. Biol. Chem.">
        <title>Second site suppressor mutations of a GTPase-deficient G-protein alpha-subunit.</title>
        <authorList>
            <person name="Apanovitch D.M."/>
            <person name="Iiri T."/>
            <person name="Karasawa T."/>
            <person name="Bourne H.R."/>
            <person name="Dohlman H.G."/>
        </authorList>
    </citation>
    <scope>MUTAGENESIS OF LYS-54; ARG-327 AND LEU-353</scope>
</reference>
<reference key="27">
    <citation type="journal article" date="1998" name="Mol. Gen. Genet.">
        <title>Switch-domain mutations in the Saccharomyces cerevisiae G protein alpha-subunit Gpa1p identify a receptor subtype-biased mating defect.</title>
        <authorList>
            <person name="DeSimone S.M."/>
            <person name="Kurjan J."/>
        </authorList>
    </citation>
    <scope>MUTAGENESIS OF GLY-321 AND GLN-323</scope>
</reference>
<reference key="28">
    <citation type="journal article" date="1999" name="Cell Biochem. Biophys.">
        <title>The yeast pheromone-responsive G alpha protein stimulates recovery from chronic pheromone treatment by two mechanisms that are activated at distinct levels of stimulus.</title>
        <authorList>
            <person name="Zhou J."/>
            <person name="Arora M."/>
            <person name="Stone D.E."/>
        </authorList>
    </citation>
    <scope>FUNCTION</scope>
</reference>
<reference key="29">
    <citation type="journal article" date="2000" name="Mol. Biol. Cell">
        <title>Dual lipid modification motifs in G(alpha) and G(gamma) subunits are required for full activity of the pheromone response pathway in Saccharomyces cerevisiae.</title>
        <authorList>
            <person name="Manahan C.L."/>
            <person name="Patnana M."/>
            <person name="Blumer K.J."/>
            <person name="Linder M.E."/>
        </authorList>
    </citation>
    <scope>PALMITOYLATION AT CYS-3</scope>
    <scope>MUTAGENESIS OF GLY-2 AND CYS-3</scope>
</reference>
<reference key="30">
    <citation type="journal article" date="2000" name="Mol. Cell. Biol.">
        <title>The C terminus of the Saccharomyces cerevisiae alpha-factor receptor contributes to the formation of preactivation complexes with its cognate G protein.</title>
        <authorList>
            <person name="Dosil M."/>
            <person name="Schandel K.A."/>
            <person name="Gupta E."/>
            <person name="Jenness D.D."/>
            <person name="Konopka J.B."/>
        </authorList>
    </citation>
    <scope>MUTAGENESIS OF ALA-345</scope>
    <scope>FORMATION OF PREACTIVATION COMPLEXES</scope>
</reference>
<reference key="31">
    <citation type="journal article" date="2000" name="Yeast">
        <title>The GTP hydrolysis defect of the Saccharomyces cerevisiae mutant G-protein Gpa1(G50V).</title>
        <authorList>
            <person name="Kallal L."/>
            <person name="Fishel R."/>
        </authorList>
    </citation>
    <scope>MUTAGENESIS OF GLY-50</scope>
</reference>
<reference key="32">
    <citation type="journal article" date="2001" name="Biochem. Biophys. Res. Commun.">
        <title>Biochemical analysis of yeast G(alpha) mutants that enhance adaptation to pheromone.</title>
        <authorList>
            <person name="Cismowski M.J."/>
            <person name="Metodiev M.V."/>
            <person name="Draper E."/>
            <person name="Stone D.E."/>
        </authorList>
    </citation>
    <scope>FUNCTION</scope>
    <scope>CATALYTIC ACTIVITY</scope>
    <scope>MUTAGENESIS OF GLU-364 AND ASN-388</scope>
</reference>
<reference key="33">
    <citation type="journal article" date="2002" name="Biochemistry">
        <title>Direct identification of a G protein ubiquitination site by mass spectrometry.</title>
        <authorList>
            <person name="Marotti L.A. Jr."/>
            <person name="Newitt R."/>
            <person name="Wang Y."/>
            <person name="Aebersold R."/>
            <person name="Dohlman H.G."/>
        </authorList>
    </citation>
    <scope>UBIQUITINATION AT LYS-165</scope>
    <scope>MUTAGENESIS OF LYS-165</scope>
    <scope>IDENTIFICATION BY MASS SPECTROMETRY</scope>
</reference>
<reference key="34">
    <citation type="journal article" date="2002" name="J. Biol. Chem.">
        <title>Characterization of Saccharomyces cerevisiae acyl-protein thioesterase 1, the enzyme responsible for G protein alpha subunit deacylation in vivo.</title>
        <authorList>
            <person name="Duncan J.A."/>
            <person name="Gilman A.G."/>
        </authorList>
    </citation>
    <scope>DEPALMITOYLATION</scope>
</reference>
<reference key="35">
    <citation type="journal article" date="2002" name="Science">
        <title>Regulation of MAPK function by direct interaction with the mating-specific G(alpha) in yeast.</title>
        <authorList>
            <person name="Metodiev M.V."/>
            <person name="Matheos D."/>
            <person name="Rose M.D."/>
            <person name="Stone D.E."/>
        </authorList>
    </citation>
    <scope>FUNCTION</scope>
    <scope>INTERACTION WITH FUS3</scope>
    <scope>MUTAGENESIS OF 21-LYS-ARG-22</scope>
    <scope>SUBCELLULAR LOCATION</scope>
</reference>
<reference key="36">
    <citation type="journal article" date="2003" name="Mol. Cell">
        <title>The yeast G protein alpha subunit Gpa1 transmits a signal through an RNA binding effector protein Scp160.</title>
        <authorList>
            <person name="Guo M."/>
            <person name="Aston C."/>
            <person name="Burchett S.A."/>
            <person name="Dyke C."/>
            <person name="Fields S."/>
            <person name="Rajarao S.J.R."/>
            <person name="Uetz P."/>
            <person name="Wang Y."/>
            <person name="Young K."/>
            <person name="Dohlman H.G."/>
        </authorList>
    </citation>
    <scope>FUNCTION</scope>
    <scope>INTERACTION WITH SCP160</scope>
</reference>
<reference key="37">
    <citation type="journal article" date="2003" name="Mol. Cell. Biol.">
        <title>Effect of the pheromone-responsive G(alpha) and phosphatase proteins of Saccharomyces cerevisiae on the subcellular localization of the Fus3 mitogen-activated protein kinase.</title>
        <authorList>
            <person name="Blackwell E."/>
            <person name="Halatek I.M."/>
            <person name="Kim H.-J.N."/>
            <person name="Ellicott A.T."/>
            <person name="Obukhov A.A."/>
            <person name="Stone D.E."/>
        </authorList>
    </citation>
    <scope>FUNCTION</scope>
</reference>
<reference key="38">
    <citation type="journal article" date="2003" name="Nature">
        <title>Global analysis of protein localization in budding yeast.</title>
        <authorList>
            <person name="Huh W.-K."/>
            <person name="Falvo J.V."/>
            <person name="Gerke L.C."/>
            <person name="Carroll A.S."/>
            <person name="Howson R.W."/>
            <person name="Weissman J.S."/>
            <person name="O'Shea E.K."/>
        </authorList>
    </citation>
    <scope>SUBCELLULAR LOCATION [LARGE SCALE ANALYSIS]</scope>
</reference>
<reference key="39">
    <citation type="journal article" date="2003" name="Nature">
        <title>Global analysis of protein expression in yeast.</title>
        <authorList>
            <person name="Ghaemmaghami S."/>
            <person name="Huh W.-K."/>
            <person name="Bower K."/>
            <person name="Howson R.W."/>
            <person name="Belle A."/>
            <person name="Dephoure N."/>
            <person name="O'Shea E.K."/>
            <person name="Weissman J.S."/>
        </authorList>
    </citation>
    <scope>LEVEL OF PROTEIN EXPRESSION [LARGE SCALE ANALYSIS]</scope>
</reference>
<reference key="40">
    <citation type="journal article" date="2003" name="Proc. Natl. Acad. Sci. U.S.A.">
        <title>A quantitative characterization of the yeast heterotrimeric G protein cycle.</title>
        <authorList>
            <person name="Yi T.-M."/>
            <person name="Kitano H."/>
            <person name="Simon M.I."/>
        </authorList>
    </citation>
    <scope>FUNCTION</scope>
</reference>
<reference key="41">
    <citation type="journal article" date="2004" name="J. Biol. Chem.">
        <title>Dominant-negative inhibition of pheromone receptor signaling by a single point mutation in the G protein alpha subunit.</title>
        <authorList>
            <person name="Wu Y.-L."/>
            <person name="Hooks S.B."/>
            <person name="Harden T.K."/>
            <person name="Dohlman H.G."/>
        </authorList>
    </citation>
    <scope>MUTAGENESIS OF ASN-388</scope>
</reference>
<reference key="42">
    <citation type="journal article" date="2005" name="J. Biol. Chem.">
        <authorList>
            <person name="Wu Y.-L."/>
            <person name="Hooks S.B."/>
            <person name="Harden T.K."/>
            <person name="Dohlman H.G."/>
        </authorList>
    </citation>
    <scope>ERRATUM OF PUBMED:15197187</scope>
</reference>
<reference key="43">
    <citation type="journal article" date="2004" name="Mol. Genet. Genomics">
        <title>Effects of mutations in the N terminal region of the yeast G protein alpha-subunit Gpa1p on signaling by pheromone receptors.</title>
        <authorList>
            <person name="Roginskaya M."/>
            <person name="Connelly S.M."/>
            <person name="Kim K.S."/>
            <person name="Patel D."/>
            <person name="Dumont M.E."/>
        </authorList>
    </citation>
    <scope>MUTAGENESIS OF ASP-15; PHE-17; LEU-18 AND LYS-54</scope>
</reference>
<reference key="44">
    <citation type="journal article" date="2005" name="J. Biol. Chem.">
        <title>Differential regulation of G protein alpha subunit trafficking by mono- and polyubiquitination.</title>
        <authorList>
            <person name="Wang Y."/>
            <person name="Marotti L.A. Jr."/>
            <person name="Lee M.J."/>
            <person name="Dohlman H.G."/>
        </authorList>
    </citation>
    <scope>FUNCTION OF UBIQUITINATION</scope>
</reference>
<reference key="45">
    <citation type="journal article" date="2006" name="Cell">
        <title>Activation of the phosphatidylinositol 3-kinase Vps34 by a G protein alpha subunit at the endosome.</title>
        <authorList>
            <person name="Slessareva J.E."/>
            <person name="Routt S.M."/>
            <person name="Temple B."/>
            <person name="Bankaitis V.A."/>
            <person name="Dohlman H.G."/>
        </authorList>
    </citation>
    <scope>FUNCTION</scope>
    <scope>INTERACTION WITH VPS15 AND VPS34</scope>
    <scope>SUBCELLULAR LOCATION</scope>
</reference>
<reference key="46">
    <citation type="journal article" date="2006" name="Eukaryot. Cell">
        <title>Genome-scale analysis reveals Sst2 as the principal regulator of mating pheromone signaling in the yeast Saccharomyces cerevisiae.</title>
        <authorList>
            <person name="Chasse S.A."/>
            <person name="Flanary P."/>
            <person name="Parnell S.C."/>
            <person name="Hao N."/>
            <person name="Cha J.Y."/>
            <person name="Siderovski D.P."/>
            <person name="Dohlman H.G."/>
        </authorList>
    </citation>
    <scope>INTERACTION WITH MDM1; RAX1; RGS2 AND SST2</scope>
    <scope>ACTIVITY REGULATION</scope>
</reference>
<reference key="47">
    <citation type="journal article" date="2007" name="J. Proteome Res.">
        <title>Large-scale phosphorylation analysis of alpha-factor-arrested Saccharomyces cerevisiae.</title>
        <authorList>
            <person name="Li X."/>
            <person name="Gerber S.A."/>
            <person name="Rudner A.D."/>
            <person name="Beausoleil S.A."/>
            <person name="Haas W."/>
            <person name="Villen J."/>
            <person name="Elias J.E."/>
            <person name="Gygi S.P."/>
        </authorList>
    </citation>
    <scope>IDENTIFICATION BY MASS SPECTROMETRY [LARGE SCALE ANALYSIS]</scope>
    <source>
        <strain>ADR376</strain>
    </source>
</reference>
<reference key="48">
    <citation type="journal article" date="2009" name="Science">
        <title>Global analysis of Cdk1 substrate phosphorylation sites provides insights into evolution.</title>
        <authorList>
            <person name="Holt L.J."/>
            <person name="Tuch B.B."/>
            <person name="Villen J."/>
            <person name="Johnson A.D."/>
            <person name="Gygi S.P."/>
            <person name="Morgan D.O."/>
        </authorList>
    </citation>
    <scope>IDENTIFICATION BY MASS SPECTROMETRY [LARGE SCALE ANALYSIS]</scope>
</reference>
<feature type="initiator methionine" description="Removed">
    <location>
        <position position="1"/>
    </location>
</feature>
<feature type="chain" id="PRO_0000203616" description="Guanine nucleotide-binding protein alpha-1 subunit">
    <location>
        <begin position="2"/>
        <end position="472"/>
    </location>
</feature>
<feature type="domain" description="G-alpha" evidence="2">
    <location>
        <begin position="40"/>
        <end position="472"/>
    </location>
</feature>
<feature type="region of interest" description="G1 motif" evidence="2">
    <location>
        <begin position="43"/>
        <end position="56"/>
    </location>
</feature>
<feature type="region of interest" description="Insert; not present in other G-proteins">
    <location>
        <begin position="127"/>
        <end position="235"/>
    </location>
</feature>
<feature type="region of interest" description="Disordered" evidence="3">
    <location>
        <begin position="162"/>
        <end position="199"/>
    </location>
</feature>
<feature type="region of interest" description="G2 motif" evidence="2">
    <location>
        <begin position="292"/>
        <end position="300"/>
    </location>
</feature>
<feature type="region of interest" description="G3 motif" evidence="2">
    <location>
        <begin position="315"/>
        <end position="324"/>
    </location>
</feature>
<feature type="region of interest" description="G4 motif" evidence="2">
    <location>
        <begin position="384"/>
        <end position="391"/>
    </location>
</feature>
<feature type="region of interest" description="G5 motif" evidence="2">
    <location>
        <begin position="442"/>
        <end position="447"/>
    </location>
</feature>
<feature type="binding site" evidence="1">
    <location>
        <position position="51"/>
    </location>
    <ligand>
        <name>GTP</name>
        <dbReference type="ChEBI" id="CHEBI:37565"/>
    </ligand>
</feature>
<feature type="binding site" evidence="1">
    <location>
        <position position="52"/>
    </location>
    <ligand>
        <name>GTP</name>
        <dbReference type="ChEBI" id="CHEBI:37565"/>
    </ligand>
</feature>
<feature type="binding site" evidence="1">
    <location>
        <position position="53"/>
    </location>
    <ligand>
        <name>GTP</name>
        <dbReference type="ChEBI" id="CHEBI:37565"/>
    </ligand>
</feature>
<feature type="binding site" evidence="1">
    <location>
        <position position="54"/>
    </location>
    <ligand>
        <name>GTP</name>
        <dbReference type="ChEBI" id="CHEBI:37565"/>
    </ligand>
</feature>
<feature type="binding site" evidence="1">
    <location>
        <position position="55"/>
    </location>
    <ligand>
        <name>GTP</name>
        <dbReference type="ChEBI" id="CHEBI:37565"/>
    </ligand>
</feature>
<feature type="binding site" evidence="1">
    <location>
        <position position="55"/>
    </location>
    <ligand>
        <name>Mg(2+)</name>
        <dbReference type="ChEBI" id="CHEBI:18420"/>
    </ligand>
</feature>
<feature type="binding site" evidence="1">
    <location>
        <position position="56"/>
    </location>
    <ligand>
        <name>GTP</name>
        <dbReference type="ChEBI" id="CHEBI:37565"/>
    </ligand>
</feature>
<feature type="binding site" evidence="1">
    <location>
        <position position="294"/>
    </location>
    <ligand>
        <name>GTP</name>
        <dbReference type="ChEBI" id="CHEBI:37565"/>
    </ligand>
</feature>
<feature type="binding site" evidence="1">
    <location>
        <position position="300"/>
    </location>
    <ligand>
        <name>GTP</name>
        <dbReference type="ChEBI" id="CHEBI:37565"/>
    </ligand>
</feature>
<feature type="binding site" evidence="1">
    <location>
        <position position="300"/>
    </location>
    <ligand>
        <name>Mg(2+)</name>
        <dbReference type="ChEBI" id="CHEBI:18420"/>
    </ligand>
</feature>
<feature type="binding site" evidence="1">
    <location>
        <position position="322"/>
    </location>
    <ligand>
        <name>GTP</name>
        <dbReference type="ChEBI" id="CHEBI:37565"/>
    </ligand>
</feature>
<feature type="binding site" evidence="1">
    <location>
        <position position="388"/>
    </location>
    <ligand>
        <name>GTP</name>
        <dbReference type="ChEBI" id="CHEBI:37565"/>
    </ligand>
</feature>
<feature type="binding site" evidence="1">
    <location>
        <position position="389"/>
    </location>
    <ligand>
        <name>GTP</name>
        <dbReference type="ChEBI" id="CHEBI:37565"/>
    </ligand>
</feature>
<feature type="binding site" evidence="1">
    <location>
        <position position="391"/>
    </location>
    <ligand>
        <name>GTP</name>
        <dbReference type="ChEBI" id="CHEBI:37565"/>
    </ligand>
</feature>
<feature type="binding site" evidence="1">
    <location>
        <position position="444"/>
    </location>
    <ligand>
        <name>GTP</name>
        <dbReference type="ChEBI" id="CHEBI:37565"/>
    </ligand>
</feature>
<feature type="lipid moiety-binding region" description="N-myristoyl glycine" evidence="22 33 35">
    <location>
        <position position="2"/>
    </location>
</feature>
<feature type="lipid moiety-binding region" description="S-palmitoyl cysteine" evidence="6 38">
    <location>
        <position position="3"/>
    </location>
</feature>
<feature type="cross-link" description="Glycyl lysine isopeptide (Lys-Gly) (interchain with G-Cter in ubiquitin)" evidence="9">
    <location>
        <position position="165"/>
    </location>
</feature>
<feature type="mutagenesis site" description="Abolishes both palmitoylation and N-myristoylation." evidence="6 35 38">
    <original>G</original>
    <variation>A</variation>
    <location>
        <position position="2"/>
    </location>
</feature>
<feature type="mutagenesis site" description="Abolishes palmitoylation but not N-myristoylation." evidence="6 38">
    <original>C</original>
    <variation>A</variation>
    <location>
        <position position="3"/>
    </location>
</feature>
<feature type="mutagenesis site" description="Slightly reduces ligand-dependent pheromone signaling." evidence="15">
    <original>D</original>
    <variation>V</variation>
    <location>
        <position position="15"/>
    </location>
</feature>
<feature type="mutagenesis site" description="Leads to a hypersensitive signaling phenotype resulting in greatly enhanced signal at low alpha-factor concentrations." evidence="15">
    <original>F</original>
    <variation>L</variation>
    <location>
        <position position="17"/>
    </location>
</feature>
<feature type="mutagenesis site" description="Reduces ligand-dependent pheromone signaling." evidence="15">
    <original>L</original>
    <variation>P</variation>
    <variation>Q</variation>
    <location>
        <position position="18"/>
    </location>
</feature>
<feature type="mutagenesis site" description="Impairs interaction with FUS3." evidence="10">
    <original>KR</original>
    <variation>EE</variation>
    <location>
        <begin position="21"/>
        <end position="22"/>
    </location>
</feature>
<feature type="mutagenesis site" description="Confers insensitivity to pheromone." evidence="5 21 25 28">
    <original>G</original>
    <variation>D</variation>
    <location>
        <position position="50"/>
    </location>
</feature>
<feature type="mutagenesis site" description="Has increased GTP occupancy and moderately reduces hydrolysis of GTP, resulting in a constitutively active form that down-regulates the pheromone response and causes hyperadaptation to pheromone." evidence="5 21 25 28">
    <original>G</original>
    <variation>V</variation>
    <location>
        <position position="50"/>
    </location>
</feature>
<feature type="mutagenesis site" description="Prevents GDP to GTP exchange; suppressor of L-323." evidence="15 42">
    <original>K</original>
    <variation>E</variation>
    <variation>I</variation>
    <location>
        <position position="54"/>
    </location>
</feature>
<feature type="mutagenesis site" description="Substantial decrease in ubiquitination." evidence="9">
    <original>K</original>
    <variation>R</variation>
    <location>
        <position position="165"/>
    </location>
</feature>
<feature type="mutagenesis site" description="Slows hydrolysis of GTP.">
    <original>R</original>
    <variation>H</variation>
    <location>
        <position position="297"/>
    </location>
</feature>
<feature type="mutagenesis site" description="In GPA1(SST); weakens interaction to SST2 and blocks its negative regulatory effect." evidence="39">
    <original>G</original>
    <variation>S</variation>
    <location>
        <position position="302"/>
    </location>
</feature>
<feature type="mutagenesis site" description="Causes a specific mating defect in alpha cells." evidence="41">
    <original>G</original>
    <variation>T</variation>
    <location>
        <position position="321"/>
    </location>
</feature>
<feature type="mutagenesis site" description="Confers insensitivity to pheromone." evidence="21 25 37">
    <original>G</original>
    <variation>A</variation>
    <variation>E</variation>
    <variation>R</variation>
    <location>
        <position position="322"/>
    </location>
</feature>
<feature type="mutagenesis site" description="Prevents hydrolysis of GTP; eliminates the interaction with STE4 and constitutively activates the pheromone response pathway." evidence="41">
    <original>Q</original>
    <variation>L</variation>
    <location>
        <position position="323"/>
    </location>
</feature>
<feature type="mutagenesis site" description="Suppressor of L-323; does not prevent GTP binding to GPA1." evidence="42">
    <original>R</original>
    <variation>S</variation>
    <location>
        <position position="327"/>
    </location>
</feature>
<feature type="mutagenesis site" description="Suppressor of a STE2-L236H mutant." evidence="7">
    <original>A</original>
    <variation>T</variation>
    <location>
        <position position="345"/>
    </location>
</feature>
<feature type="mutagenesis site" description="Suppressor of L-323." evidence="42">
    <location>
        <position position="353"/>
    </location>
</feature>
<feature type="mutagenesis site" description="Confers insensitivity to pheromone." evidence="25">
    <original>E</original>
    <variation>K</variation>
    <location>
        <position position="355"/>
    </location>
</feature>
<feature type="mutagenesis site" description="Enhances the rate of GDP for GTP exchange and slows hydrolysis of GTP, resulting in a constitutively active form that down-regulates the pheromone response independently of the pheromone receptor." evidence="8 25 37">
    <original>E</original>
    <variation>K</variation>
    <location>
        <position position="364"/>
    </location>
</feature>
<feature type="mutagenesis site" description="Forms a nondissociable complex with the pheromone receptor in response to receptor activation, resulting in reduced pheromone responsiveness." evidence="8 16 21 37">
    <original>N</original>
    <variation>D</variation>
    <location>
        <position position="388"/>
    </location>
</feature>
<feature type="mutagenesis site" description="Causes constitutive activation of the pheromone response pathway." evidence="8 16 21 37">
    <original>N</original>
    <variation>K</variation>
    <location>
        <position position="388"/>
    </location>
</feature>
<feature type="mutagenesis site" description="Causes constitutive activation of the pheromone response pathway." evidence="21">
    <original>D</original>
    <variation>A</variation>
    <location>
        <position position="391"/>
    </location>
</feature>
<feature type="mutagenesis site" description="Impairs pheromone signaling in a and alpha cells." evidence="20">
    <original>K</original>
    <variation>P</variation>
    <location>
        <position position="467"/>
    </location>
</feature>
<feature type="mutagenesis site" description="Impairs pheromone signaling specifically in a cells." evidence="20">
    <original>K</original>
    <variation>P</variation>
    <location>
        <position position="468"/>
    </location>
</feature>
<feature type="mutagenesis site" description="Confers insensitivity to pheromone." evidence="25">
    <original>G</original>
    <variation>D</variation>
    <location>
        <position position="470"/>
    </location>
</feature>
<feature type="sequence conflict" description="In Ref. 2; AAA18403." evidence="43" ref="2">
    <original>W</original>
    <variation>R</variation>
    <location>
        <position position="82"/>
    </location>
</feature>
<feature type="sequence conflict" description="In Ref. 2; AAA18403." evidence="43" ref="2">
    <original>A</original>
    <variation>V</variation>
    <location>
        <position position="194"/>
    </location>
</feature>
<feature type="sequence conflict" description="In Ref. 2; AAA18403." evidence="43" ref="2">
    <original>R</original>
    <variation>K</variation>
    <location>
        <position position="226"/>
    </location>
</feature>
<feature type="sequence conflict" description="In Ref. 2; AAA18403." evidence="43" ref="2">
    <original>K</original>
    <variation>R</variation>
    <location>
        <position position="246"/>
    </location>
</feature>
<feature type="sequence conflict" description="In Ref. 2; AAA18403." evidence="43" ref="2">
    <original>I</original>
    <variation>S</variation>
    <location>
        <position position="469"/>
    </location>
</feature>
<feature type="strand" evidence="44">
    <location>
        <begin position="303"/>
        <end position="309"/>
    </location>
</feature>
<feature type="strand" evidence="44">
    <location>
        <begin position="311"/>
        <end position="319"/>
    </location>
</feature>
<feature type="turn" evidence="44">
    <location>
        <begin position="325"/>
        <end position="329"/>
    </location>
</feature>
<feature type="helix" evidence="44">
    <location>
        <begin position="330"/>
        <end position="335"/>
    </location>
</feature>
<feature type="strand" evidence="44">
    <location>
        <begin position="338"/>
        <end position="344"/>
    </location>
</feature>
<feature type="helix" evidence="44">
    <location>
        <begin position="360"/>
        <end position="373"/>
    </location>
</feature>
<feature type="strand" evidence="44">
    <location>
        <begin position="379"/>
        <end position="381"/>
    </location>
</feature>
<feature type="strand" evidence="44">
    <location>
        <begin position="383"/>
        <end position="388"/>
    </location>
</feature>
<feature type="helix" evidence="44">
    <location>
        <begin position="390"/>
        <end position="396"/>
    </location>
</feature>
<feature type="strand" evidence="44">
    <location>
        <begin position="403"/>
        <end position="405"/>
    </location>
</feature>
<feature type="helix" evidence="44">
    <location>
        <begin position="417"/>
        <end position="428"/>
    </location>
</feature>
<feature type="strand" evidence="44">
    <location>
        <begin position="437"/>
        <end position="441"/>
    </location>
</feature>
<feature type="helix" evidence="44">
    <location>
        <begin position="450"/>
        <end position="465"/>
    </location>
</feature>
<feature type="turn" evidence="44">
    <location>
        <begin position="466"/>
        <end position="468"/>
    </location>
</feature>
<dbReference type="EMBL" id="M15867">
    <property type="protein sequence ID" value="AAA34650.1"/>
    <property type="molecule type" value="Genomic_DNA"/>
</dbReference>
<dbReference type="EMBL" id="M17414">
    <property type="protein sequence ID" value="AAA18403.1"/>
    <property type="molecule type" value="Unassigned_DNA"/>
</dbReference>
<dbReference type="EMBL" id="U10555">
    <property type="protein sequence ID" value="AAB68432.1"/>
    <property type="molecule type" value="Genomic_DNA"/>
</dbReference>
<dbReference type="EMBL" id="AY692963">
    <property type="protein sequence ID" value="AAT92982.1"/>
    <property type="molecule type" value="Genomic_DNA"/>
</dbReference>
<dbReference type="EMBL" id="BK006934">
    <property type="protein sequence ID" value="DAA06692.1"/>
    <property type="molecule type" value="Genomic_DNA"/>
</dbReference>
<dbReference type="PIR" id="A25906">
    <property type="entry name" value="A25906"/>
</dbReference>
<dbReference type="RefSeq" id="NP_011868.1">
    <property type="nucleotide sequence ID" value="NM_001179135.1"/>
</dbReference>
<dbReference type="PDB" id="7AD3">
    <property type="method" value="EM"/>
    <property type="resolution" value="3.50 A"/>
    <property type="chains" value="E/H=300-472"/>
</dbReference>
<dbReference type="PDBsum" id="7AD3"/>
<dbReference type="EMDB" id="EMD-11720"/>
<dbReference type="SMR" id="P08539"/>
<dbReference type="BioGRID" id="36430">
    <property type="interactions" value="61"/>
</dbReference>
<dbReference type="ComplexPortal" id="CPX-1646">
    <property type="entry name" value="G protein heterotrimer"/>
</dbReference>
<dbReference type="DIP" id="DIP-15N"/>
<dbReference type="FunCoup" id="P08539">
    <property type="interactions" value="694"/>
</dbReference>
<dbReference type="IntAct" id="P08539">
    <property type="interactions" value="18"/>
</dbReference>
<dbReference type="MINT" id="P08539"/>
<dbReference type="STRING" id="4932.YHR005C"/>
<dbReference type="iPTMnet" id="P08539"/>
<dbReference type="SwissPalm" id="P08539"/>
<dbReference type="PaxDb" id="4932-YHR005C"/>
<dbReference type="PeptideAtlas" id="P08539"/>
<dbReference type="DNASU" id="856394"/>
<dbReference type="EnsemblFungi" id="YHR005C_mRNA">
    <property type="protein sequence ID" value="YHR005C"/>
    <property type="gene ID" value="YHR005C"/>
</dbReference>
<dbReference type="GeneID" id="856394"/>
<dbReference type="KEGG" id="sce:YHR005C"/>
<dbReference type="AGR" id="SGD:S000001047"/>
<dbReference type="SGD" id="S000001047">
    <property type="gene designation" value="GPA1"/>
</dbReference>
<dbReference type="VEuPathDB" id="FungiDB:YHR005C"/>
<dbReference type="eggNOG" id="KOG0082">
    <property type="taxonomic scope" value="Eukaryota"/>
</dbReference>
<dbReference type="GeneTree" id="ENSGT00940000168787"/>
<dbReference type="HOGENOM" id="CLU_014184_2_0_1"/>
<dbReference type="InParanoid" id="P08539"/>
<dbReference type="OMA" id="QVIWADA"/>
<dbReference type="OrthoDB" id="5817230at2759"/>
<dbReference type="BioCyc" id="YEAST:G3O-31070-MONOMER"/>
<dbReference type="Reactome" id="R-SCE-112043">
    <property type="pathway name" value="PLC beta mediated events"/>
</dbReference>
<dbReference type="Reactome" id="R-SCE-202040">
    <property type="pathway name" value="G-protein activation"/>
</dbReference>
<dbReference type="Reactome" id="R-SCE-399997">
    <property type="pathway name" value="Acetylcholine regulates insulin secretion"/>
</dbReference>
<dbReference type="Reactome" id="R-SCE-416476">
    <property type="pathway name" value="G alpha (q) signalling events"/>
</dbReference>
<dbReference type="Reactome" id="R-SCE-416482">
    <property type="pathway name" value="G alpha (12/13) signalling events"/>
</dbReference>
<dbReference type="Reactome" id="R-SCE-418592">
    <property type="pathway name" value="ADP signalling through P2Y purinoceptor 1"/>
</dbReference>
<dbReference type="Reactome" id="R-SCE-434316">
    <property type="pathway name" value="Fatty Acids bound to GPR40 (FFAR1) regulate insulin secretion"/>
</dbReference>
<dbReference type="Reactome" id="R-SCE-9013148">
    <property type="pathway name" value="CDC42 GTPase cycle"/>
</dbReference>
<dbReference type="Reactome" id="R-SCE-9856530">
    <property type="pathway name" value="High laminar flow shear stress activates signaling by PIEZO1 and PECAM1:CDH5:KDR in endothelial cells"/>
</dbReference>
<dbReference type="BioGRID-ORCS" id="856394">
    <property type="hits" value="9 hits in 10 CRISPR screens"/>
</dbReference>
<dbReference type="PRO" id="PR:P08539"/>
<dbReference type="Proteomes" id="UP000002311">
    <property type="component" value="Chromosome VIII"/>
</dbReference>
<dbReference type="RNAct" id="P08539">
    <property type="molecule type" value="protein"/>
</dbReference>
<dbReference type="GO" id="GO:0005737">
    <property type="term" value="C:cytoplasm"/>
    <property type="evidence" value="ECO:0000318"/>
    <property type="project" value="GO_Central"/>
</dbReference>
<dbReference type="GO" id="GO:0005829">
    <property type="term" value="C:cytosol"/>
    <property type="evidence" value="ECO:0007005"/>
    <property type="project" value="SGD"/>
</dbReference>
<dbReference type="GO" id="GO:0005768">
    <property type="term" value="C:endosome"/>
    <property type="evidence" value="ECO:0000314"/>
    <property type="project" value="SGD"/>
</dbReference>
<dbReference type="GO" id="GO:0010008">
    <property type="term" value="C:endosome membrane"/>
    <property type="evidence" value="ECO:0007669"/>
    <property type="project" value="UniProtKB-SubCell"/>
</dbReference>
<dbReference type="GO" id="GO:0005834">
    <property type="term" value="C:heterotrimeric G-protein complex"/>
    <property type="evidence" value="ECO:0000314"/>
    <property type="project" value="SGD"/>
</dbReference>
<dbReference type="GO" id="GO:0005886">
    <property type="term" value="C:plasma membrane"/>
    <property type="evidence" value="ECO:0000314"/>
    <property type="project" value="SGD"/>
</dbReference>
<dbReference type="GO" id="GO:0001664">
    <property type="term" value="F:G protein-coupled receptor binding"/>
    <property type="evidence" value="ECO:0000318"/>
    <property type="project" value="GO_Central"/>
</dbReference>
<dbReference type="GO" id="GO:0031681">
    <property type="term" value="F:G-protein beta-subunit binding"/>
    <property type="evidence" value="ECO:0000353"/>
    <property type="project" value="SGD"/>
</dbReference>
<dbReference type="GO" id="GO:0031683">
    <property type="term" value="F:G-protein beta/gamma-subunit complex binding"/>
    <property type="evidence" value="ECO:0000318"/>
    <property type="project" value="GO_Central"/>
</dbReference>
<dbReference type="GO" id="GO:0005525">
    <property type="term" value="F:GTP binding"/>
    <property type="evidence" value="ECO:0007669"/>
    <property type="project" value="UniProtKB-KW"/>
</dbReference>
<dbReference type="GO" id="GO:0003924">
    <property type="term" value="F:GTPase activity"/>
    <property type="evidence" value="ECO:0000314"/>
    <property type="project" value="SGD"/>
</dbReference>
<dbReference type="GO" id="GO:0046872">
    <property type="term" value="F:metal ion binding"/>
    <property type="evidence" value="ECO:0007669"/>
    <property type="project" value="UniProtKB-KW"/>
</dbReference>
<dbReference type="GO" id="GO:0007186">
    <property type="term" value="P:G protein-coupled receptor signaling pathway"/>
    <property type="evidence" value="ECO:0007669"/>
    <property type="project" value="InterPro"/>
</dbReference>
<dbReference type="GO" id="GO:0000742">
    <property type="term" value="P:karyogamy involved in conjugation with cellular fusion"/>
    <property type="evidence" value="ECO:0000315"/>
    <property type="project" value="SGD"/>
</dbReference>
<dbReference type="GO" id="GO:0000743">
    <property type="term" value="P:nuclear migration involved in conjugation with cellular fusion"/>
    <property type="evidence" value="ECO:0000315"/>
    <property type="project" value="SGD"/>
</dbReference>
<dbReference type="GO" id="GO:0000750">
    <property type="term" value="P:pheromone-dependent signal transduction involved in conjugation with cellular fusion"/>
    <property type="evidence" value="ECO:0000314"/>
    <property type="project" value="ComplexPortal"/>
</dbReference>
<dbReference type="GO" id="GO:0006109">
    <property type="term" value="P:regulation of carbohydrate metabolic process"/>
    <property type="evidence" value="ECO:0000315"/>
    <property type="project" value="SGD"/>
</dbReference>
<dbReference type="CDD" id="cd00066">
    <property type="entry name" value="G-alpha"/>
    <property type="match status" value="1"/>
</dbReference>
<dbReference type="FunFam" id="1.10.400.10:FF:000012">
    <property type="entry name" value="G protein alpha subunit"/>
    <property type="match status" value="1"/>
</dbReference>
<dbReference type="FunFam" id="1.10.400.10:FF:000015">
    <property type="entry name" value="G protein alpha subunit"/>
    <property type="match status" value="1"/>
</dbReference>
<dbReference type="FunFam" id="3.40.50.300:FF:000563">
    <property type="entry name" value="Guanine nucleotide-binding protein alpha subunit"/>
    <property type="match status" value="1"/>
</dbReference>
<dbReference type="Gene3D" id="1.10.400.10">
    <property type="entry name" value="GI Alpha 1, domain 2-like"/>
    <property type="match status" value="2"/>
</dbReference>
<dbReference type="Gene3D" id="3.40.50.300">
    <property type="entry name" value="P-loop containing nucleotide triphosphate hydrolases"/>
    <property type="match status" value="2"/>
</dbReference>
<dbReference type="InterPro" id="IPR002975">
    <property type="entry name" value="Fungi_Gprotein_alpha"/>
</dbReference>
<dbReference type="InterPro" id="IPR001019">
    <property type="entry name" value="Gprotein_alpha_su"/>
</dbReference>
<dbReference type="InterPro" id="IPR011025">
    <property type="entry name" value="GproteinA_insert"/>
</dbReference>
<dbReference type="InterPro" id="IPR027417">
    <property type="entry name" value="P-loop_NTPase"/>
</dbReference>
<dbReference type="PANTHER" id="PTHR10218">
    <property type="entry name" value="GTP-BINDING PROTEIN ALPHA SUBUNIT"/>
    <property type="match status" value="1"/>
</dbReference>
<dbReference type="PANTHER" id="PTHR10218:SF302">
    <property type="entry name" value="GUANINE NUCLEOTIDE-BINDING PROTEIN ALPHA-5 SUBUNIT"/>
    <property type="match status" value="1"/>
</dbReference>
<dbReference type="Pfam" id="PF00503">
    <property type="entry name" value="G-alpha"/>
    <property type="match status" value="1"/>
</dbReference>
<dbReference type="PRINTS" id="PR00318">
    <property type="entry name" value="GPROTEINA"/>
</dbReference>
<dbReference type="PRINTS" id="PR01241">
    <property type="entry name" value="GPROTEINAFNG"/>
</dbReference>
<dbReference type="SMART" id="SM00275">
    <property type="entry name" value="G_alpha"/>
    <property type="match status" value="1"/>
</dbReference>
<dbReference type="SUPFAM" id="SSF52540">
    <property type="entry name" value="P-loop containing nucleoside triphosphate hydrolases"/>
    <property type="match status" value="1"/>
</dbReference>
<dbReference type="SUPFAM" id="SSF47895">
    <property type="entry name" value="Transducin (alpha subunit), insertion domain"/>
    <property type="match status" value="1"/>
</dbReference>
<dbReference type="PROSITE" id="PS51882">
    <property type="entry name" value="G_ALPHA"/>
    <property type="match status" value="1"/>
</dbReference>
<comment type="function">
    <text evidence="4 8 10 11 12 13 17 19 21 23 24 25 26 27 28 29 30 31 32 37 40">Alpha subunit of the heterotrimeric guanine nucleotide-binding protein (G protein) that mediates mating pheromone signal transduction. Binding of alpha-factor or a-factor to its cognate transmembrane receptor STE2 and STE3, respectively, allows the receptor to serve as a guanine nucleotide exchange factor (GEF) on GPA1. The exchange of GDP for GTP on the G protein alpha subunit alters its interaction with the G protein beta subunit STE4, leading to dissociation of the G protein beta-gamma dimer STE4-STE18. The dissociated subunits activate downstream effectors to activate the mating response pathway and induce changes necessary to produce mating-competent cells. STE4-STE18 activate the downstream pheromone signaling MAP kinase cascade leading to expression of mating-specific genes, inducing cell cycle arrest in G1, promoting polarized cell growth to form mating projections (shmoos), and establishing the changes in plasma membrane, cell wall and nuclear envelope to permit cell-cell fusion (plasmogamy) and fusion of the two haploid nuclei (karyogamy). GPA1 transmits a signal that requires direct binding to the effector enzyme PI3K located at the endosome, promoting increased PI3 production. The intrinsic GTPase activity of GPA1 determines the duration of signaling, and is dramatically accelerated by the RGS protein SST2. In unstimulated cells, GDP-bound GPA1 sequesters the G protein beta-gamma subunit STE4-STE18, preventing it from activating the downstream effectors. Also down-regulates the signal by inhibiting the pheromone-induced accumulation of FUS3 in the nucleus.</text>
</comment>
<comment type="cofactor">
    <cofactor evidence="1">
        <name>Mg(2+)</name>
        <dbReference type="ChEBI" id="CHEBI:18420"/>
    </cofactor>
</comment>
<comment type="activity regulation">
    <text evidence="18">Alternates between an inactive form bound to GDP and an active form bound to GTP. Activated by the G protein coupled receptors (GPCRs) STE2 and STE3, which serve as guanine nucleotide-exchange factors (GEFs), and inactivated by SST2, probably acting as a GTPase-activating protein (GAP).</text>
</comment>
<comment type="subunit">
    <text evidence="10 13 18 19 34 36 40">G proteins are composed of 3 units; alpha, beta and gamma. The alpha chain contains the guanine nucleotide binding site. In its GDP-bound form, binds to the G protein beta-gamma dimer STE4-STE18. Directly interacts with the beta subunit STE4. Probably forms preactivation complexes with unligated receptors STE2 and STE3. Interacts with FUS3. Pheromone-induced activation of GPA1 increases its association with FUS3. Interacts with SCP160. SCP160 binds specifically to the GTP-bound form of GPA1. Interacts with the phosphatidylinositol 3-kinase (PI3K) subunits VPS15 and VPS34 at the endosome. The GTP-bound form of GPA1 binds directly and selectively to the catalytic subunit VPS34, while the GDP-bound form binds to VPS15, which appears to function as an alternative G protein beta subunit for GPA1. Interacts with regulators of G protein signaling (RGS) proteins MDM1, RAX1, RGS2 and SST2, but SST2 alone binds preferentially to the transition state conformation of GPA1, indicating that it acts as a GAP for this G protein.</text>
</comment>
<comment type="interaction">
    <interactant intactId="EBI-7376">
        <id>P08539</id>
    </interactant>
    <interactant intactId="EBI-18232">
        <id>P11972</id>
        <label>SST2</label>
    </interactant>
    <organismsDiffer>false</organismsDiffer>
    <experiments>3</experiments>
</comment>
<comment type="interaction">
    <interactant intactId="EBI-7376">
        <id>P08539</id>
    </interactant>
    <interactant intactId="EBI-7390">
        <id>P18851</id>
        <label>STE4</label>
    </interactant>
    <organismsDiffer>false</organismsDiffer>
    <experiments>9</experiments>
</comment>
<comment type="interaction">
    <interactant intactId="EBI-7376">
        <id>P08539</id>
    </interactant>
    <interactant intactId="EBI-20347">
        <id>P22219</id>
        <label>VPS15</label>
    </interactant>
    <organismsDiffer>false</organismsDiffer>
    <experiments>2</experiments>
</comment>
<comment type="interaction">
    <interactant intactId="EBI-7376">
        <id>P08539</id>
    </interactant>
    <interactant intactId="EBI-20405">
        <id>P22543</id>
        <label>VPS34</label>
    </interactant>
    <organismsDiffer>false</organismsDiffer>
    <experiments>3</experiments>
</comment>
<comment type="subcellular location">
    <subcellularLocation>
        <location>Cell membrane</location>
        <topology>Lipid-anchor</topology>
        <orientation>Cytoplasmic side</orientation>
    </subcellularLocation>
    <subcellularLocation>
        <location>Endosome membrane</location>
        <topology>Lipid-anchor</topology>
        <orientation>Cytoplasmic side</orientation>
    </subcellularLocation>
    <text>Localizes predominantly to the plasma membrane in its inactive, GDP-bound form, and is directed to endosomes once in its active, GTP-bound form. Concentrates at the tip of the mating projections.</text>
</comment>
<comment type="domain">
    <text>Contains an 'insertion' sequence of 109 residues which is not present in other G-protein alpha chains.</text>
</comment>
<comment type="PTM">
    <text evidence="6 22 33 35 38">N-myristoylation by NMT1 is pheromone-stimulated and required for palmitoylation of Cys-3. This lipid modification anchors the protein to membranes. Depalmitoylated by YLR118C/APT1.</text>
</comment>
<comment type="PTM">
    <text evidence="9">Monoubiquitination targets the protein for degradation to the vacuole, and polyubiquitination tags the protein for degradation by the proteasome. This may be an additional signaling regulation mechanism.</text>
</comment>
<comment type="miscellaneous">
    <text evidence="14">Present with 9920 molecules/cell in log phase SD medium.</text>
</comment>
<comment type="similarity">
    <text evidence="43">Belongs to the G-alpha family. G(q) subfamily.</text>
</comment>
<name>GPA1_YEAST</name>
<accession>P08539</accession>
<accession>D3DKU8</accession>
<evidence type="ECO:0000250" key="1">
    <source>
        <dbReference type="UniProtKB" id="P18064"/>
    </source>
</evidence>
<evidence type="ECO:0000255" key="2">
    <source>
        <dbReference type="PROSITE-ProRule" id="PRU01230"/>
    </source>
</evidence>
<evidence type="ECO:0000256" key="3">
    <source>
        <dbReference type="SAM" id="MobiDB-lite"/>
    </source>
</evidence>
<evidence type="ECO:0000269" key="4">
    <source>
    </source>
</evidence>
<evidence type="ECO:0000269" key="5">
    <source>
    </source>
</evidence>
<evidence type="ECO:0000269" key="6">
    <source>
    </source>
</evidence>
<evidence type="ECO:0000269" key="7">
    <source>
    </source>
</evidence>
<evidence type="ECO:0000269" key="8">
    <source>
    </source>
</evidence>
<evidence type="ECO:0000269" key="9">
    <source>
    </source>
</evidence>
<evidence type="ECO:0000269" key="10">
    <source>
    </source>
</evidence>
<evidence type="ECO:0000269" key="11">
    <source>
    </source>
</evidence>
<evidence type="ECO:0000269" key="12">
    <source>
    </source>
</evidence>
<evidence type="ECO:0000269" key="13">
    <source>
    </source>
</evidence>
<evidence type="ECO:0000269" key="14">
    <source>
    </source>
</evidence>
<evidence type="ECO:0000269" key="15">
    <source>
    </source>
</evidence>
<evidence type="ECO:0000269" key="16">
    <source>
    </source>
</evidence>
<evidence type="ECO:0000269" key="17">
    <source>
    </source>
</evidence>
<evidence type="ECO:0000269" key="18">
    <source>
    </source>
</evidence>
<evidence type="ECO:0000269" key="19">
    <source>
    </source>
</evidence>
<evidence type="ECO:0000269" key="20">
    <source>
    </source>
</evidence>
<evidence type="ECO:0000269" key="21">
    <source>
    </source>
</evidence>
<evidence type="ECO:0000269" key="22">
    <source>
    </source>
</evidence>
<evidence type="ECO:0000269" key="23">
    <source>
    </source>
</evidence>
<evidence type="ECO:0000269" key="24">
    <source>
    </source>
</evidence>
<evidence type="ECO:0000269" key="25">
    <source>
    </source>
</evidence>
<evidence type="ECO:0000269" key="26">
    <source>
    </source>
</evidence>
<evidence type="ECO:0000269" key="27">
    <source>
    </source>
</evidence>
<evidence type="ECO:0000269" key="28">
    <source>
    </source>
</evidence>
<evidence type="ECO:0000269" key="29">
    <source>
    </source>
</evidence>
<evidence type="ECO:0000269" key="30">
    <source>
    </source>
</evidence>
<evidence type="ECO:0000269" key="31">
    <source>
    </source>
</evidence>
<evidence type="ECO:0000269" key="32">
    <source>
    </source>
</evidence>
<evidence type="ECO:0000269" key="33">
    <source>
    </source>
</evidence>
<evidence type="ECO:0000269" key="34">
    <source>
    </source>
</evidence>
<evidence type="ECO:0000269" key="35">
    <source>
    </source>
</evidence>
<evidence type="ECO:0000269" key="36">
    <source>
    </source>
</evidence>
<evidence type="ECO:0000269" key="37">
    <source>
    </source>
</evidence>
<evidence type="ECO:0000269" key="38">
    <source>
    </source>
</evidence>
<evidence type="ECO:0000269" key="39">
    <source>
    </source>
</evidence>
<evidence type="ECO:0000269" key="40">
    <source>
    </source>
</evidence>
<evidence type="ECO:0000269" key="41">
    <source>
    </source>
</evidence>
<evidence type="ECO:0000269" key="42">
    <source>
    </source>
</evidence>
<evidence type="ECO:0000305" key="43"/>
<evidence type="ECO:0007829" key="44">
    <source>
        <dbReference type="PDB" id="7AD3"/>
    </source>
</evidence>